<evidence type="ECO:0000255" key="1">
    <source>
        <dbReference type="HAMAP-Rule" id="MF_01263"/>
    </source>
</evidence>
<proteinExistence type="inferred from homology"/>
<protein>
    <recommendedName>
        <fullName evidence="1">CCA-adding enzyme</fullName>
        <ecNumber evidence="1">2.7.7.72</ecNumber>
    </recommendedName>
    <alternativeName>
        <fullName evidence="1">CCA tRNA nucleotidyltransferase</fullName>
    </alternativeName>
    <alternativeName>
        <fullName evidence="1">tRNA CCA-pyrophosphorylase</fullName>
    </alternativeName>
    <alternativeName>
        <fullName evidence="1">tRNA adenylyl-/cytidylyl- transferase</fullName>
    </alternativeName>
    <alternativeName>
        <fullName evidence="1">tRNA nucleotidyltransferase</fullName>
    </alternativeName>
    <alternativeName>
        <fullName evidence="1">tRNA-NT</fullName>
    </alternativeName>
</protein>
<keyword id="KW-0067">ATP-binding</keyword>
<keyword id="KW-0460">Magnesium</keyword>
<keyword id="KW-0479">Metal-binding</keyword>
<keyword id="KW-0547">Nucleotide-binding</keyword>
<keyword id="KW-0548">Nucleotidyltransferase</keyword>
<keyword id="KW-0692">RNA repair</keyword>
<keyword id="KW-0694">RNA-binding</keyword>
<keyword id="KW-0808">Transferase</keyword>
<keyword id="KW-0819">tRNA processing</keyword>
<gene>
    <name evidence="1" type="primary">cca</name>
    <name type="ordered locus">BT9727_1418</name>
</gene>
<dbReference type="EC" id="2.7.7.72" evidence="1"/>
<dbReference type="EMBL" id="AE017355">
    <property type="protein sequence ID" value="AAT59463.1"/>
    <property type="molecule type" value="Genomic_DNA"/>
</dbReference>
<dbReference type="RefSeq" id="WP_000439304.1">
    <property type="nucleotide sequence ID" value="NC_005957.1"/>
</dbReference>
<dbReference type="RefSeq" id="YP_035752.1">
    <property type="nucleotide sequence ID" value="NC_005957.1"/>
</dbReference>
<dbReference type="SMR" id="Q6HL19"/>
<dbReference type="KEGG" id="btk:BT9727_1418"/>
<dbReference type="PATRIC" id="fig|281309.8.peg.1490"/>
<dbReference type="HOGENOM" id="CLU_015961_3_0_9"/>
<dbReference type="Proteomes" id="UP000001301">
    <property type="component" value="Chromosome"/>
</dbReference>
<dbReference type="GO" id="GO:0005524">
    <property type="term" value="F:ATP binding"/>
    <property type="evidence" value="ECO:0007669"/>
    <property type="project" value="UniProtKB-UniRule"/>
</dbReference>
<dbReference type="GO" id="GO:0004810">
    <property type="term" value="F:CCA tRNA nucleotidyltransferase activity"/>
    <property type="evidence" value="ECO:0007669"/>
    <property type="project" value="UniProtKB-UniRule"/>
</dbReference>
<dbReference type="GO" id="GO:0000287">
    <property type="term" value="F:magnesium ion binding"/>
    <property type="evidence" value="ECO:0007669"/>
    <property type="project" value="UniProtKB-UniRule"/>
</dbReference>
<dbReference type="GO" id="GO:0000049">
    <property type="term" value="F:tRNA binding"/>
    <property type="evidence" value="ECO:0007669"/>
    <property type="project" value="UniProtKB-UniRule"/>
</dbReference>
<dbReference type="GO" id="GO:0042245">
    <property type="term" value="P:RNA repair"/>
    <property type="evidence" value="ECO:0007669"/>
    <property type="project" value="UniProtKB-KW"/>
</dbReference>
<dbReference type="GO" id="GO:0001680">
    <property type="term" value="P:tRNA 3'-terminal CCA addition"/>
    <property type="evidence" value="ECO:0007669"/>
    <property type="project" value="UniProtKB-UniRule"/>
</dbReference>
<dbReference type="CDD" id="cd05398">
    <property type="entry name" value="NT_ClassII-CCAase"/>
    <property type="match status" value="1"/>
</dbReference>
<dbReference type="Gene3D" id="1.10.110.30">
    <property type="match status" value="1"/>
</dbReference>
<dbReference type="Gene3D" id="1.10.246.80">
    <property type="match status" value="1"/>
</dbReference>
<dbReference type="Gene3D" id="1.20.58.560">
    <property type="match status" value="1"/>
</dbReference>
<dbReference type="Gene3D" id="3.30.460.10">
    <property type="entry name" value="Beta Polymerase, domain 2"/>
    <property type="match status" value="1"/>
</dbReference>
<dbReference type="HAMAP" id="MF_01263">
    <property type="entry name" value="CCA_bact_type3"/>
    <property type="match status" value="1"/>
</dbReference>
<dbReference type="InterPro" id="IPR050264">
    <property type="entry name" value="Bact_CCA-adding_enz_type3_sf"/>
</dbReference>
<dbReference type="InterPro" id="IPR032810">
    <property type="entry name" value="CCA-adding_enz_C"/>
</dbReference>
<dbReference type="InterPro" id="IPR023068">
    <property type="entry name" value="CCA-adding_enz_firmicutes"/>
</dbReference>
<dbReference type="InterPro" id="IPR043519">
    <property type="entry name" value="NT_sf"/>
</dbReference>
<dbReference type="InterPro" id="IPR002646">
    <property type="entry name" value="PolA_pol_head_dom"/>
</dbReference>
<dbReference type="InterPro" id="IPR032828">
    <property type="entry name" value="PolyA_RNA-bd"/>
</dbReference>
<dbReference type="NCBIfam" id="NF009814">
    <property type="entry name" value="PRK13299.1"/>
    <property type="match status" value="1"/>
</dbReference>
<dbReference type="PANTHER" id="PTHR46173">
    <property type="entry name" value="CCA TRNA NUCLEOTIDYLTRANSFERASE 1, MITOCHONDRIAL"/>
    <property type="match status" value="1"/>
</dbReference>
<dbReference type="PANTHER" id="PTHR46173:SF1">
    <property type="entry name" value="CCA TRNA NUCLEOTIDYLTRANSFERASE 1, MITOCHONDRIAL"/>
    <property type="match status" value="1"/>
</dbReference>
<dbReference type="Pfam" id="PF01743">
    <property type="entry name" value="PolyA_pol"/>
    <property type="match status" value="1"/>
</dbReference>
<dbReference type="Pfam" id="PF12627">
    <property type="entry name" value="PolyA_pol_RNAbd"/>
    <property type="match status" value="1"/>
</dbReference>
<dbReference type="Pfam" id="PF13735">
    <property type="entry name" value="tRNA_NucTran2_2"/>
    <property type="match status" value="1"/>
</dbReference>
<dbReference type="SUPFAM" id="SSF81301">
    <property type="entry name" value="Nucleotidyltransferase"/>
    <property type="match status" value="1"/>
</dbReference>
<dbReference type="SUPFAM" id="SSF81891">
    <property type="entry name" value="Poly A polymerase C-terminal region-like"/>
    <property type="match status" value="1"/>
</dbReference>
<accession>Q6HL19</accession>
<comment type="function">
    <text evidence="1">Catalyzes the addition and repair of the essential 3'-terminal CCA sequence in tRNAs without using a nucleic acid template. Adds these three nucleotides in the order of C, C, and A to the tRNA nucleotide-73, using CTP and ATP as substrates and producing inorganic pyrophosphate. tRNA 3'-terminal CCA addition is required both for tRNA processing and repair. Also involved in tRNA surveillance by mediating tandem CCA addition to generate a CCACCA at the 3' terminus of unstable tRNAs. While stable tRNAs receive only 3'-terminal CCA, unstable tRNAs are marked with CCACCA and rapidly degraded.</text>
</comment>
<comment type="catalytic activity">
    <reaction evidence="1">
        <text>a tRNA precursor + 2 CTP + ATP = a tRNA with a 3' CCA end + 3 diphosphate</text>
        <dbReference type="Rhea" id="RHEA:14433"/>
        <dbReference type="Rhea" id="RHEA-COMP:10465"/>
        <dbReference type="Rhea" id="RHEA-COMP:10468"/>
        <dbReference type="ChEBI" id="CHEBI:30616"/>
        <dbReference type="ChEBI" id="CHEBI:33019"/>
        <dbReference type="ChEBI" id="CHEBI:37563"/>
        <dbReference type="ChEBI" id="CHEBI:74896"/>
        <dbReference type="ChEBI" id="CHEBI:83071"/>
        <dbReference type="EC" id="2.7.7.72"/>
    </reaction>
</comment>
<comment type="catalytic activity">
    <reaction evidence="1">
        <text>a tRNA with a 3' CCA end + 2 CTP + ATP = a tRNA with a 3' CCACCA end + 3 diphosphate</text>
        <dbReference type="Rhea" id="RHEA:76235"/>
        <dbReference type="Rhea" id="RHEA-COMP:10468"/>
        <dbReference type="Rhea" id="RHEA-COMP:18655"/>
        <dbReference type="ChEBI" id="CHEBI:30616"/>
        <dbReference type="ChEBI" id="CHEBI:33019"/>
        <dbReference type="ChEBI" id="CHEBI:37563"/>
        <dbReference type="ChEBI" id="CHEBI:83071"/>
        <dbReference type="ChEBI" id="CHEBI:195187"/>
    </reaction>
    <physiologicalReaction direction="left-to-right" evidence="1">
        <dbReference type="Rhea" id="RHEA:76236"/>
    </physiologicalReaction>
</comment>
<comment type="cofactor">
    <cofactor evidence="1">
        <name>Mg(2+)</name>
        <dbReference type="ChEBI" id="CHEBI:18420"/>
    </cofactor>
</comment>
<comment type="subunit">
    <text evidence="1">Homodimer.</text>
</comment>
<comment type="miscellaneous">
    <text evidence="1">A single active site specifically recognizes both ATP and CTP and is responsible for their addition.</text>
</comment>
<comment type="similarity">
    <text evidence="1">Belongs to the tRNA nucleotidyltransferase/poly(A) polymerase family. Bacterial CCA-adding enzyme type 3 subfamily.</text>
</comment>
<name>CCA_BACHK</name>
<reference key="1">
    <citation type="journal article" date="2006" name="J. Bacteriol.">
        <title>Pathogenomic sequence analysis of Bacillus cereus and Bacillus thuringiensis isolates closely related to Bacillus anthracis.</title>
        <authorList>
            <person name="Han C.S."/>
            <person name="Xie G."/>
            <person name="Challacombe J.F."/>
            <person name="Altherr M.R."/>
            <person name="Bhotika S.S."/>
            <person name="Bruce D."/>
            <person name="Campbell C.S."/>
            <person name="Campbell M.L."/>
            <person name="Chen J."/>
            <person name="Chertkov O."/>
            <person name="Cleland C."/>
            <person name="Dimitrijevic M."/>
            <person name="Doggett N.A."/>
            <person name="Fawcett J.J."/>
            <person name="Glavina T."/>
            <person name="Goodwin L.A."/>
            <person name="Hill K.K."/>
            <person name="Hitchcock P."/>
            <person name="Jackson P.J."/>
            <person name="Keim P."/>
            <person name="Kewalramani A.R."/>
            <person name="Longmire J."/>
            <person name="Lucas S."/>
            <person name="Malfatti S."/>
            <person name="McMurry K."/>
            <person name="Meincke L.J."/>
            <person name="Misra M."/>
            <person name="Moseman B.L."/>
            <person name="Mundt M."/>
            <person name="Munk A.C."/>
            <person name="Okinaka R.T."/>
            <person name="Parson-Quintana B."/>
            <person name="Reilly L.P."/>
            <person name="Richardson P."/>
            <person name="Robinson D.L."/>
            <person name="Rubin E."/>
            <person name="Saunders E."/>
            <person name="Tapia R."/>
            <person name="Tesmer J.G."/>
            <person name="Thayer N."/>
            <person name="Thompson L.S."/>
            <person name="Tice H."/>
            <person name="Ticknor L.O."/>
            <person name="Wills P.L."/>
            <person name="Brettin T.S."/>
            <person name="Gilna P."/>
        </authorList>
    </citation>
    <scope>NUCLEOTIDE SEQUENCE [LARGE SCALE GENOMIC DNA]</scope>
    <source>
        <strain>97-27</strain>
    </source>
</reference>
<organism>
    <name type="scientific">Bacillus thuringiensis subsp. konkukian (strain 97-27)</name>
    <dbReference type="NCBI Taxonomy" id="281309"/>
    <lineage>
        <taxon>Bacteria</taxon>
        <taxon>Bacillati</taxon>
        <taxon>Bacillota</taxon>
        <taxon>Bacilli</taxon>
        <taxon>Bacillales</taxon>
        <taxon>Bacillaceae</taxon>
        <taxon>Bacillus</taxon>
        <taxon>Bacillus cereus group</taxon>
    </lineage>
</organism>
<feature type="chain" id="PRO_0000139030" description="CCA-adding enzyme">
    <location>
        <begin position="1"/>
        <end position="397"/>
    </location>
</feature>
<feature type="binding site" evidence="1">
    <location>
        <position position="26"/>
    </location>
    <ligand>
        <name>ATP</name>
        <dbReference type="ChEBI" id="CHEBI:30616"/>
    </ligand>
</feature>
<feature type="binding site" evidence="1">
    <location>
        <position position="26"/>
    </location>
    <ligand>
        <name>CTP</name>
        <dbReference type="ChEBI" id="CHEBI:37563"/>
    </ligand>
</feature>
<feature type="binding site" evidence="1">
    <location>
        <position position="29"/>
    </location>
    <ligand>
        <name>ATP</name>
        <dbReference type="ChEBI" id="CHEBI:30616"/>
    </ligand>
</feature>
<feature type="binding site" evidence="1">
    <location>
        <position position="29"/>
    </location>
    <ligand>
        <name>CTP</name>
        <dbReference type="ChEBI" id="CHEBI:37563"/>
    </ligand>
</feature>
<feature type="binding site" evidence="1">
    <location>
        <position position="39"/>
    </location>
    <ligand>
        <name>Mg(2+)</name>
        <dbReference type="ChEBI" id="CHEBI:18420"/>
    </ligand>
</feature>
<feature type="binding site" evidence="1">
    <location>
        <position position="41"/>
    </location>
    <ligand>
        <name>Mg(2+)</name>
        <dbReference type="ChEBI" id="CHEBI:18420"/>
    </ligand>
</feature>
<feature type="binding site" evidence="1">
    <location>
        <position position="110"/>
    </location>
    <ligand>
        <name>ATP</name>
        <dbReference type="ChEBI" id="CHEBI:30616"/>
    </ligand>
</feature>
<feature type="binding site" evidence="1">
    <location>
        <position position="110"/>
    </location>
    <ligand>
        <name>CTP</name>
        <dbReference type="ChEBI" id="CHEBI:37563"/>
    </ligand>
</feature>
<feature type="binding site" evidence="1">
    <location>
        <position position="153"/>
    </location>
    <ligand>
        <name>ATP</name>
        <dbReference type="ChEBI" id="CHEBI:30616"/>
    </ligand>
</feature>
<feature type="binding site" evidence="1">
    <location>
        <position position="153"/>
    </location>
    <ligand>
        <name>CTP</name>
        <dbReference type="ChEBI" id="CHEBI:37563"/>
    </ligand>
</feature>
<feature type="binding site" evidence="1">
    <location>
        <position position="156"/>
    </location>
    <ligand>
        <name>ATP</name>
        <dbReference type="ChEBI" id="CHEBI:30616"/>
    </ligand>
</feature>
<feature type="binding site" evidence="1">
    <location>
        <position position="156"/>
    </location>
    <ligand>
        <name>CTP</name>
        <dbReference type="ChEBI" id="CHEBI:37563"/>
    </ligand>
</feature>
<feature type="binding site" evidence="1">
    <location>
        <position position="159"/>
    </location>
    <ligand>
        <name>ATP</name>
        <dbReference type="ChEBI" id="CHEBI:30616"/>
    </ligand>
</feature>
<feature type="binding site" evidence="1">
    <location>
        <position position="159"/>
    </location>
    <ligand>
        <name>CTP</name>
        <dbReference type="ChEBI" id="CHEBI:37563"/>
    </ligand>
</feature>
<feature type="binding site" evidence="1">
    <location>
        <position position="162"/>
    </location>
    <ligand>
        <name>ATP</name>
        <dbReference type="ChEBI" id="CHEBI:30616"/>
    </ligand>
</feature>
<feature type="binding site" evidence="1">
    <location>
        <position position="162"/>
    </location>
    <ligand>
        <name>CTP</name>
        <dbReference type="ChEBI" id="CHEBI:37563"/>
    </ligand>
</feature>
<sequence>MERFKKASSIIETLKQQGHEAYFVGGSVRDLIIDRPIGDIDIATSALPEEVMAIFPRHVPVGLEHGTVIVVENGEPYEVTTFRTESEYEDFRRPSSVQFVRSLEEDLKRRDFTMNAIAMTEEGEMVDLFAGQEAIQKREIVTVGNAADRFQEDALRMMRGIRFVSTLGFSLETKTKQAIETYGHLLEHIAIERITVEFEKLLTGTYCVKGLKELVETKLFSHLPYLQMSEERLLKATQYNWDSFETDIEAWAFFLYCIGEEHPSVFLRQWKFSNKKIKDIVAVLLTIRKRKEKDWDTVLLYKTGIHIAEMAERVYEAMIESYDHTSVERVQTLFQALPIKSRQEMDVTGNDLLNWASKKPGPWVAEMIQKIEEAIVQGNVVNEKECIREWLQECNLL</sequence>